<reference key="1">
    <citation type="submission" date="2009-03" db="EMBL/GenBank/DDBJ databases">
        <title>Complete genome sequence of Edwardsiella ictaluri 93-146.</title>
        <authorList>
            <person name="Williams M.L."/>
            <person name="Gillaspy A.F."/>
            <person name="Dyer D.W."/>
            <person name="Thune R.L."/>
            <person name="Waldbieser G.C."/>
            <person name="Schuster S.C."/>
            <person name="Gipson J."/>
            <person name="Zaitshik J."/>
            <person name="Landry C."/>
            <person name="Lawrence M.L."/>
        </authorList>
    </citation>
    <scope>NUCLEOTIDE SEQUENCE [LARGE SCALE GENOMIC DNA]</scope>
    <source>
        <strain>93-146</strain>
    </source>
</reference>
<dbReference type="EMBL" id="CP001600">
    <property type="protein sequence ID" value="ACR68807.1"/>
    <property type="molecule type" value="Genomic_DNA"/>
</dbReference>
<dbReference type="RefSeq" id="WP_015870963.1">
    <property type="nucleotide sequence ID" value="NZ_CP169062.1"/>
</dbReference>
<dbReference type="SMR" id="C5B9V6"/>
<dbReference type="STRING" id="67780.B6E78_01300"/>
<dbReference type="GeneID" id="69538599"/>
<dbReference type="KEGG" id="eic:NT01EI_1623"/>
<dbReference type="PATRIC" id="fig|634503.3.peg.1454"/>
<dbReference type="HOGENOM" id="CLU_067812_0_1_6"/>
<dbReference type="OrthoDB" id="9794530at2"/>
<dbReference type="Proteomes" id="UP000001485">
    <property type="component" value="Chromosome"/>
</dbReference>
<dbReference type="GO" id="GO:0000902">
    <property type="term" value="P:cell morphogenesis"/>
    <property type="evidence" value="ECO:0007669"/>
    <property type="project" value="InterPro"/>
</dbReference>
<dbReference type="GO" id="GO:0000917">
    <property type="term" value="P:division septum assembly"/>
    <property type="evidence" value="ECO:0007669"/>
    <property type="project" value="UniProtKB-KW"/>
</dbReference>
<dbReference type="GO" id="GO:0051302">
    <property type="term" value="P:regulation of cell division"/>
    <property type="evidence" value="ECO:0007669"/>
    <property type="project" value="InterPro"/>
</dbReference>
<dbReference type="GO" id="GO:1901891">
    <property type="term" value="P:regulation of cell septum assembly"/>
    <property type="evidence" value="ECO:0007669"/>
    <property type="project" value="InterPro"/>
</dbReference>
<dbReference type="Gene3D" id="2.160.20.70">
    <property type="match status" value="1"/>
</dbReference>
<dbReference type="Gene3D" id="3.30.70.260">
    <property type="match status" value="1"/>
</dbReference>
<dbReference type="HAMAP" id="MF_00267">
    <property type="entry name" value="MinC"/>
    <property type="match status" value="1"/>
</dbReference>
<dbReference type="InterPro" id="IPR016098">
    <property type="entry name" value="CAP/MinC_C"/>
</dbReference>
<dbReference type="InterPro" id="IPR013033">
    <property type="entry name" value="MinC"/>
</dbReference>
<dbReference type="InterPro" id="IPR036145">
    <property type="entry name" value="MinC_C_sf"/>
</dbReference>
<dbReference type="InterPro" id="IPR007874">
    <property type="entry name" value="MinC_N"/>
</dbReference>
<dbReference type="InterPro" id="IPR005526">
    <property type="entry name" value="Septum_form_inhib_MinC_C"/>
</dbReference>
<dbReference type="NCBIfam" id="TIGR01222">
    <property type="entry name" value="minC"/>
    <property type="match status" value="1"/>
</dbReference>
<dbReference type="PANTHER" id="PTHR34108">
    <property type="entry name" value="SEPTUM SITE-DETERMINING PROTEIN MINC"/>
    <property type="match status" value="1"/>
</dbReference>
<dbReference type="PANTHER" id="PTHR34108:SF1">
    <property type="entry name" value="SEPTUM SITE-DETERMINING PROTEIN MINC"/>
    <property type="match status" value="1"/>
</dbReference>
<dbReference type="Pfam" id="PF03775">
    <property type="entry name" value="MinC_C"/>
    <property type="match status" value="1"/>
</dbReference>
<dbReference type="Pfam" id="PF05209">
    <property type="entry name" value="MinC_N"/>
    <property type="match status" value="1"/>
</dbReference>
<dbReference type="SUPFAM" id="SSF63848">
    <property type="entry name" value="Cell-division inhibitor MinC, C-terminal domain"/>
    <property type="match status" value="1"/>
</dbReference>
<accession>C5B9V6</accession>
<proteinExistence type="inferred from homology"/>
<gene>
    <name evidence="1" type="primary">minC</name>
    <name type="ordered locus">NT01EI_1623</name>
</gene>
<name>MINC_EDWI9</name>
<evidence type="ECO:0000255" key="1">
    <source>
        <dbReference type="HAMAP-Rule" id="MF_00267"/>
    </source>
</evidence>
<feature type="chain" id="PRO_1000204693" description="Probable septum site-determining protein MinC">
    <location>
        <begin position="1"/>
        <end position="226"/>
    </location>
</feature>
<comment type="function">
    <text evidence="1">Cell division inhibitor that blocks the formation of polar Z ring septums. Rapidly oscillates between the poles of the cell to destabilize FtsZ filaments that have formed before they mature into polar Z rings. Prevents FtsZ polymerization.</text>
</comment>
<comment type="subunit">
    <text evidence="1">Interacts with MinD and FtsZ.</text>
</comment>
<comment type="similarity">
    <text evidence="1">Belongs to the MinC family.</text>
</comment>
<protein>
    <recommendedName>
        <fullName evidence="1">Probable septum site-determining protein MinC</fullName>
    </recommendedName>
</protein>
<sequence>MSQAPIELKGSSFTLSVVHLHNSQPEVIRPALIAKVGQAPAFLKNAPVVINITDVNGSVEWHEMLRMFSAAGLHVIGVSGCRDETQKQAVLHAGLPLLSEGKGAVKKAPVAPATPVAAKTKIISTPVRSGQQIYARSGDLIVTSHVSAGAELIADGNIHVYGIMRGRALAGAAGDSGSQIFCSHLSAELVSIAGQYWLSDQIPENYYGQAAHLTLSSGALTIQSLF</sequence>
<organism>
    <name type="scientific">Edwardsiella ictaluri (strain 93-146)</name>
    <dbReference type="NCBI Taxonomy" id="634503"/>
    <lineage>
        <taxon>Bacteria</taxon>
        <taxon>Pseudomonadati</taxon>
        <taxon>Pseudomonadota</taxon>
        <taxon>Gammaproteobacteria</taxon>
        <taxon>Enterobacterales</taxon>
        <taxon>Hafniaceae</taxon>
        <taxon>Edwardsiella</taxon>
    </lineage>
</organism>
<keyword id="KW-0131">Cell cycle</keyword>
<keyword id="KW-0132">Cell division</keyword>
<keyword id="KW-0717">Septation</keyword>